<reference key="1">
    <citation type="journal article" date="2010" name="J. Am. Chem. Soc.">
        <title>Genome-based characterization of two prenylation steps in the assembly of the stephacidin and notoamide anticancer agents in a marine-derived Aspergillus sp.</title>
        <authorList>
            <person name="Ding Y."/>
            <person name="de Wet J.R."/>
            <person name="Cavalcoli J."/>
            <person name="Li S."/>
            <person name="Greshock T.J."/>
            <person name="Miller K.A."/>
            <person name="Finefield J.M."/>
            <person name="Sunderhaus J.D."/>
            <person name="McAfoos T.J."/>
            <person name="Tsukamoto S."/>
            <person name="Williams R.M."/>
            <person name="Sherman D.H."/>
        </authorList>
    </citation>
    <scope>NUCLEOTIDE SEQUENCE [GENOMIC DNA]</scope>
    <source>
        <strain>MF297-2</strain>
    </source>
</reference>
<reference key="2">
    <citation type="journal article" date="2007" name="Angew. Chem. Int. Ed.">
        <title>Notoamides A-D: prenylated indole alkaloids isolated from a marine-derived fungus, Aspergillus sp.</title>
        <authorList>
            <person name="Kato H."/>
            <person name="Yoshida T."/>
            <person name="Tokue T."/>
            <person name="Nojiri Y."/>
            <person name="Hirota H."/>
            <person name="Ohta T."/>
            <person name="Williams R.M."/>
            <person name="Tsukamoto S."/>
        </authorList>
    </citation>
    <scope>BIOTECHNOLOGY</scope>
</reference>
<reference key="3">
    <citation type="journal article" date="2012" name="J. Am. Chem. Soc.">
        <title>Biochemical characterization of NotB as an FAD-dependent oxidase in the biosynthesis of notoamide indole alkaloids.</title>
        <authorList>
            <person name="Li S."/>
            <person name="Finefield J.M."/>
            <person name="Sunderhaus J.D."/>
            <person name="McAfoos T.J."/>
            <person name="Williams R.M."/>
            <person name="Sherman D.H."/>
        </authorList>
    </citation>
    <scope>FUNCTION</scope>
</reference>
<reference key="4">
    <citation type="journal article" date="2012" name="Med. Chem. Commun.">
        <title>Comparative analysis of the biosynthetic systems for fungal bicyclo[2.2.2]diazaoctane indole alkaloids: the (+)/(-)-notoamide, paraherquamide and malbrancheamide pathways.</title>
        <authorList>
            <person name="Li S."/>
            <person name="Anand K."/>
            <person name="Tran H."/>
            <person name="Yu F."/>
            <person name="Finefield J.M."/>
            <person name="Sunderhaus J.D."/>
            <person name="McAfoos T.J."/>
            <person name="Tsukamoto S."/>
            <person name="Williams R.M."/>
            <person name="Sherman D.H."/>
        </authorList>
    </citation>
    <scope>FUNCTION</scope>
</reference>
<proteinExistence type="evidence at protein level"/>
<keyword id="KW-0238">DNA-binding</keyword>
<keyword id="KW-0539">Nucleus</keyword>
<keyword id="KW-0804">Transcription</keyword>
<keyword id="KW-0805">Transcription regulation</keyword>
<feature type="chain" id="PRO_0000448821" description="Notoamide biosynthesis cluster transcriptional coactivator notR">
    <location>
        <begin position="1"/>
        <end position="460"/>
    </location>
</feature>
<feature type="domain" description="HTH iclR-type" evidence="1">
    <location>
        <begin position="74"/>
        <end position="145"/>
    </location>
</feature>
<feature type="DNA-binding region" description="H-T-H motif" evidence="1">
    <location>
        <begin position="107"/>
        <end position="126"/>
    </location>
</feature>
<feature type="region of interest" description="Disordered" evidence="2">
    <location>
        <begin position="300"/>
        <end position="320"/>
    </location>
</feature>
<name>NOTR_ASPSM</name>
<organism>
    <name type="scientific">Aspergillus sp. (strain MF297-2)</name>
    <dbReference type="NCBI Taxonomy" id="877550"/>
    <lineage>
        <taxon>Eukaryota</taxon>
        <taxon>Fungi</taxon>
        <taxon>Dikarya</taxon>
        <taxon>Ascomycota</taxon>
        <taxon>Pezizomycotina</taxon>
        <taxon>Eurotiomycetes</taxon>
        <taxon>Eurotiomycetidae</taxon>
        <taxon>Eurotiales</taxon>
        <taxon>Aspergillaceae</taxon>
        <taxon>Aspergillus</taxon>
    </lineage>
</organism>
<protein>
    <recommendedName>
        <fullName evidence="4">Notoamide biosynthesis cluster transcriptional coactivator notR</fullName>
    </recommendedName>
    <alternativeName>
        <fullName evidence="5">Notoamide biosynthesis cluster protein R</fullName>
    </alternativeName>
</protein>
<comment type="function">
    <text evidence="7">Transcription factor that probably regulates the expression of the gene cluster that mediates the biosynthesis of notoamide, a fungal indole alkaloid that belongs to a family of natural products containing a characteristic bicyclo[2.2.2]diazaoctane core.</text>
</comment>
<comment type="subcellular location">
    <subcellularLocation>
        <location evidence="6">Nucleus</location>
    </subcellularLocation>
</comment>
<comment type="biotechnology">
    <text evidence="3">Notoamides have been shown to exhibit antitumoral activities (PubMed:17304611). Notoamides A-C show moderate cytotoxicity against HeLa and L1210 cells with IC(50) values in the range of 22-52 mg/ml, but the IC(50) value of notoamide D is greater than 100 mg/ml (PubMed:17304611). Moreover, notoamide C induces G2/M-cell cycle arrest at a concentration of 6.3 mg/ml (PubMed:17304611).</text>
</comment>
<sequence length="460" mass="50244">MPGIAMDGLSKLEAESERLTATIKSYVRHRRDVESSDQLRASPDANMEASRTKSVILASIANIKALLGGPVELLQDLARQVEIVACLRWLAEYQILACIPAEGGMSIQDLADLAGVPDIQLRRVIRLVGTSGFLQEPMPNYVSHTPLSAQFVTNQSWLDAAVFMAELAAPTALHMPAATHRFGGSRHPTETAYNLALNSLQPFGAAIQERPKLGRQWSAYLHHAVGLHQEKKIADMLSQLKWSSLGNSFVVEVGAQSTSMAHHLANKFPTLHLIVQIDRSRASRLNPDYLWPGEMMNGLTRDFTPQPESSPRPGSASSRVTVTYRSASMPQPVVDAAVYILHVPVLSTNSPAGADAMETVKTELQDYLGILRATAGILLIPTANLLPEPGSLSDPNFEAVARTRDLNYLQLANEGEMEMTDLFSAIETTRDGLGRLVITNQLRSHIGLTVCLTLKHETYC</sequence>
<dbReference type="EMBL" id="HM622670">
    <property type="protein sequence ID" value="ADM34151.1"/>
    <property type="molecule type" value="Genomic_DNA"/>
</dbReference>
<dbReference type="SMR" id="E1ACR3"/>
<dbReference type="GO" id="GO:0005634">
    <property type="term" value="C:nucleus"/>
    <property type="evidence" value="ECO:0007669"/>
    <property type="project" value="UniProtKB-SubCell"/>
</dbReference>
<dbReference type="GO" id="GO:0003677">
    <property type="term" value="F:DNA binding"/>
    <property type="evidence" value="ECO:0007669"/>
    <property type="project" value="UniProtKB-KW"/>
</dbReference>
<dbReference type="Gene3D" id="3.40.50.150">
    <property type="entry name" value="Vaccinia Virus protein VP39"/>
    <property type="match status" value="1"/>
</dbReference>
<dbReference type="Gene3D" id="1.10.10.10">
    <property type="entry name" value="Winged helix-like DNA-binding domain superfamily/Winged helix DNA-binding domain"/>
    <property type="match status" value="1"/>
</dbReference>
<dbReference type="InterPro" id="IPR029063">
    <property type="entry name" value="SAM-dependent_MTases_sf"/>
</dbReference>
<dbReference type="InterPro" id="IPR036388">
    <property type="entry name" value="WH-like_DNA-bd_sf"/>
</dbReference>
<dbReference type="InterPro" id="IPR036390">
    <property type="entry name" value="WH_DNA-bd_sf"/>
</dbReference>
<dbReference type="PANTHER" id="PTHR43712:SF15">
    <property type="entry name" value="MONODICTYPHENONE CLUSTER TRANSCRIPTIONAL COACTIVATOR MDPA"/>
    <property type="match status" value="1"/>
</dbReference>
<dbReference type="PANTHER" id="PTHR43712">
    <property type="entry name" value="PUTATIVE (AFU_ORTHOLOGUE AFUA_4G14580)-RELATED"/>
    <property type="match status" value="1"/>
</dbReference>
<dbReference type="SUPFAM" id="SSF46785">
    <property type="entry name" value="Winged helix' DNA-binding domain"/>
    <property type="match status" value="1"/>
</dbReference>
<accession>E1ACR3</accession>
<evidence type="ECO:0000255" key="1">
    <source>
        <dbReference type="PROSITE-ProRule" id="PRU00393"/>
    </source>
</evidence>
<evidence type="ECO:0000256" key="2">
    <source>
        <dbReference type="SAM" id="MobiDB-lite"/>
    </source>
</evidence>
<evidence type="ECO:0000269" key="3">
    <source>
    </source>
</evidence>
<evidence type="ECO:0000303" key="4">
    <source>
    </source>
</evidence>
<evidence type="ECO:0000303" key="5">
    <source>
    </source>
</evidence>
<evidence type="ECO:0000305" key="6"/>
<evidence type="ECO:0000305" key="7">
    <source>
    </source>
</evidence>